<evidence type="ECO:0000255" key="1">
    <source>
        <dbReference type="HAMAP-Rule" id="MF_00362"/>
    </source>
</evidence>
<evidence type="ECO:0000305" key="2"/>
<organism>
    <name type="scientific">Chlamydia trachomatis serovar L2 (strain ATCC VR-902B / DSM 19102 / 434/Bu)</name>
    <dbReference type="NCBI Taxonomy" id="471472"/>
    <lineage>
        <taxon>Bacteria</taxon>
        <taxon>Pseudomonadati</taxon>
        <taxon>Chlamydiota</taxon>
        <taxon>Chlamydiia</taxon>
        <taxon>Chlamydiales</taxon>
        <taxon>Chlamydiaceae</taxon>
        <taxon>Chlamydia/Chlamydophila group</taxon>
        <taxon>Chlamydia</taxon>
    </lineage>
</organism>
<name>RL10_CHLT2</name>
<accession>B0B7N3</accession>
<comment type="function">
    <text evidence="1">Forms part of the ribosomal stalk, playing a central role in the interaction of the ribosome with GTP-bound translation factors.</text>
</comment>
<comment type="subunit">
    <text evidence="1">Part of the ribosomal stalk of the 50S ribosomal subunit. The N-terminus interacts with L11 and the large rRNA to form the base of the stalk. The C-terminus forms an elongated spine to which L12 dimers bind in a sequential fashion forming a multimeric L10(L12)X complex.</text>
</comment>
<comment type="similarity">
    <text evidence="1">Belongs to the universal ribosomal protein uL10 family.</text>
</comment>
<dbReference type="EMBL" id="AM884176">
    <property type="protein sequence ID" value="CAP04009.1"/>
    <property type="molecule type" value="Genomic_DNA"/>
</dbReference>
<dbReference type="RefSeq" id="WP_009873721.1">
    <property type="nucleotide sequence ID" value="NC_010287.1"/>
</dbReference>
<dbReference type="RefSeq" id="YP_001654645.1">
    <property type="nucleotide sequence ID" value="NC_010287.1"/>
</dbReference>
<dbReference type="SMR" id="B0B7N3"/>
<dbReference type="KEGG" id="ctb:CTL0569"/>
<dbReference type="PATRIC" id="fig|471472.4.peg.610"/>
<dbReference type="HOGENOM" id="CLU_092227_1_2_0"/>
<dbReference type="Proteomes" id="UP001154402">
    <property type="component" value="Chromosome"/>
</dbReference>
<dbReference type="GO" id="GO:0015934">
    <property type="term" value="C:large ribosomal subunit"/>
    <property type="evidence" value="ECO:0007669"/>
    <property type="project" value="InterPro"/>
</dbReference>
<dbReference type="GO" id="GO:0070180">
    <property type="term" value="F:large ribosomal subunit rRNA binding"/>
    <property type="evidence" value="ECO:0007669"/>
    <property type="project" value="UniProtKB-UniRule"/>
</dbReference>
<dbReference type="GO" id="GO:0003735">
    <property type="term" value="F:structural constituent of ribosome"/>
    <property type="evidence" value="ECO:0007669"/>
    <property type="project" value="InterPro"/>
</dbReference>
<dbReference type="GO" id="GO:0006412">
    <property type="term" value="P:translation"/>
    <property type="evidence" value="ECO:0007669"/>
    <property type="project" value="UniProtKB-UniRule"/>
</dbReference>
<dbReference type="CDD" id="cd05797">
    <property type="entry name" value="Ribosomal_L10"/>
    <property type="match status" value="1"/>
</dbReference>
<dbReference type="FunFam" id="3.30.70.1730:FF:000018">
    <property type="entry name" value="50S ribosomal protein L10"/>
    <property type="match status" value="1"/>
</dbReference>
<dbReference type="Gene3D" id="3.30.70.1730">
    <property type="match status" value="1"/>
</dbReference>
<dbReference type="Gene3D" id="6.10.250.290">
    <property type="match status" value="1"/>
</dbReference>
<dbReference type="HAMAP" id="MF_00362">
    <property type="entry name" value="Ribosomal_uL10"/>
    <property type="match status" value="1"/>
</dbReference>
<dbReference type="InterPro" id="IPR001790">
    <property type="entry name" value="Ribosomal_uL10"/>
</dbReference>
<dbReference type="InterPro" id="IPR043141">
    <property type="entry name" value="Ribosomal_uL10-like_sf"/>
</dbReference>
<dbReference type="InterPro" id="IPR022973">
    <property type="entry name" value="Ribosomal_uL10_bac"/>
</dbReference>
<dbReference type="InterPro" id="IPR047865">
    <property type="entry name" value="Ribosomal_uL10_bac_type"/>
</dbReference>
<dbReference type="InterPro" id="IPR002363">
    <property type="entry name" value="Ribosomal_uL10_CS_bac"/>
</dbReference>
<dbReference type="NCBIfam" id="NF000955">
    <property type="entry name" value="PRK00099.1-1"/>
    <property type="match status" value="1"/>
</dbReference>
<dbReference type="PANTHER" id="PTHR11560">
    <property type="entry name" value="39S RIBOSOMAL PROTEIN L10, MITOCHONDRIAL"/>
    <property type="match status" value="1"/>
</dbReference>
<dbReference type="Pfam" id="PF00466">
    <property type="entry name" value="Ribosomal_L10"/>
    <property type="match status" value="1"/>
</dbReference>
<dbReference type="SUPFAM" id="SSF160369">
    <property type="entry name" value="Ribosomal protein L10-like"/>
    <property type="match status" value="1"/>
</dbReference>
<dbReference type="PROSITE" id="PS01109">
    <property type="entry name" value="RIBOSOMAL_L10"/>
    <property type="match status" value="1"/>
</dbReference>
<keyword id="KW-0687">Ribonucleoprotein</keyword>
<keyword id="KW-0689">Ribosomal protein</keyword>
<keyword id="KW-0694">RNA-binding</keyword>
<keyword id="KW-0699">rRNA-binding</keyword>
<feature type="chain" id="PRO_1000120936" description="Large ribosomal subunit protein uL10">
    <location>
        <begin position="1"/>
        <end position="172"/>
    </location>
</feature>
<sequence>MKEEKKLLLREVEEKITASQGFILLRYLGFTATHSRSFRNNLSGVSAEFEVLKKKIFFKALETSGVEMDPEDSEGHLGVVFAYGDPVSAAKQVLDFNKQHNDSLVFLAGRIDNASLSGREVEAVAKLPSMKELRQQVVGLIAAPMSQVVGIMNSVLSGVVSCVDQKAEKTQE</sequence>
<gene>
    <name evidence="1" type="primary">rplJ</name>
    <name type="ordered locus">CTL0569</name>
</gene>
<proteinExistence type="inferred from homology"/>
<protein>
    <recommendedName>
        <fullName evidence="1">Large ribosomal subunit protein uL10</fullName>
    </recommendedName>
    <alternativeName>
        <fullName evidence="2">50S ribosomal protein L10</fullName>
    </alternativeName>
</protein>
<reference key="1">
    <citation type="journal article" date="2008" name="Genome Res.">
        <title>Chlamydia trachomatis: genome sequence analysis of lymphogranuloma venereum isolates.</title>
        <authorList>
            <person name="Thomson N.R."/>
            <person name="Holden M.T.G."/>
            <person name="Carder C."/>
            <person name="Lennard N."/>
            <person name="Lockey S.J."/>
            <person name="Marsh P."/>
            <person name="Skipp P."/>
            <person name="O'Connor C.D."/>
            <person name="Goodhead I."/>
            <person name="Norbertzcak H."/>
            <person name="Harris B."/>
            <person name="Ormond D."/>
            <person name="Rance R."/>
            <person name="Quail M.A."/>
            <person name="Parkhill J."/>
            <person name="Stephens R.S."/>
            <person name="Clarke I.N."/>
        </authorList>
    </citation>
    <scope>NUCLEOTIDE SEQUENCE [LARGE SCALE GENOMIC DNA]</scope>
    <source>
        <strain>ATCC VR-902B / DSM 19102 / 434/Bu</strain>
    </source>
</reference>